<sequence>MNHFPKLLSSQIGFDVAQTMLENFDRHYRIFREAAVEAKTLYEHGDWHGLQRLARERITSYDDRVKECVEVLEDEYDAENIDDEVWQQIKLHYIGLLTSHRQPECAETFFNSVCCKILHRSYFSNDFIFVRPAISTEYLENDEPAAKPTYRAYYPGTDGLATTLERIVTNFQLEPAFDDLPRDIGCVMQAIHDEFGHFDEAPNFQIHVLSSLFFRNKSAYIVGRIINADRVLPFAVPIRHVRPGVLSLDTVLLRRDQLMIIFGFSHSYFLVDMGVPSAYVDFLCTIMPGKPKAEIYTSVGLQKQGKNLFYRDLLHHLSHSSDRFIIAPGIKGLVMLVFTLPSFPYVFKIIKDHFPPPKETTRAQIMEKYQLVKRHDRLGRMADTLEYSSVALPIARLDHALVRELEKEVPSLLEYEDGNLVIEHLYIERRMTPLNLYLQNGSDSDVEHGVKEYGNAVKELMKANIFPGDMLYKNFGVTRHGRVVFYDYDEIEYLTDCNVRRVPPPRNEEDELSGEPWYTVGPHDIFPETYGPFLLGDPRVRDVFMKHHADFFDPALWQASKDKLIQGELPDFYPYDTALRFCTRYPARFGATDQNDGAGDAQRAA</sequence>
<name>ACEK_BURL3</name>
<proteinExistence type="inferred from homology"/>
<reference key="1">
    <citation type="submission" date="2005-10" db="EMBL/GenBank/DDBJ databases">
        <title>Complete sequence of chromosome 1 of Burkholderia sp. 383.</title>
        <authorList>
            <consortium name="US DOE Joint Genome Institute"/>
            <person name="Copeland A."/>
            <person name="Lucas S."/>
            <person name="Lapidus A."/>
            <person name="Barry K."/>
            <person name="Detter J.C."/>
            <person name="Glavina T."/>
            <person name="Hammon N."/>
            <person name="Israni S."/>
            <person name="Pitluck S."/>
            <person name="Chain P."/>
            <person name="Malfatti S."/>
            <person name="Shin M."/>
            <person name="Vergez L."/>
            <person name="Schmutz J."/>
            <person name="Larimer F."/>
            <person name="Land M."/>
            <person name="Kyrpides N."/>
            <person name="Lykidis A."/>
            <person name="Richardson P."/>
        </authorList>
    </citation>
    <scope>NUCLEOTIDE SEQUENCE [LARGE SCALE GENOMIC DNA]</scope>
    <source>
        <strain>ATCC 17760 / DSM 23089 / LMG 22485 / NCIMB 9086 / R18194 / 383</strain>
    </source>
</reference>
<dbReference type="EC" id="2.7.11.5" evidence="1"/>
<dbReference type="EC" id="3.1.3.-" evidence="1"/>
<dbReference type="EMBL" id="CP000151">
    <property type="protein sequence ID" value="ABB09863.1"/>
    <property type="status" value="ALT_INIT"/>
    <property type="molecule type" value="Genomic_DNA"/>
</dbReference>
<dbReference type="RefSeq" id="WP_041492972.1">
    <property type="nucleotide sequence ID" value="NC_007510.1"/>
</dbReference>
<dbReference type="SMR" id="Q39CF3"/>
<dbReference type="GeneID" id="45096142"/>
<dbReference type="KEGG" id="bur:Bcep18194_A6269"/>
<dbReference type="PATRIC" id="fig|482957.22.peg.3286"/>
<dbReference type="HOGENOM" id="CLU_033804_1_1_4"/>
<dbReference type="Proteomes" id="UP000002705">
    <property type="component" value="Chromosome 1"/>
</dbReference>
<dbReference type="GO" id="GO:0005737">
    <property type="term" value="C:cytoplasm"/>
    <property type="evidence" value="ECO:0007669"/>
    <property type="project" value="UniProtKB-SubCell"/>
</dbReference>
<dbReference type="GO" id="GO:0008772">
    <property type="term" value="F:[isocitrate dehydrogenase (NADP+)] kinase activity"/>
    <property type="evidence" value="ECO:0007669"/>
    <property type="project" value="UniProtKB-UniRule"/>
</dbReference>
<dbReference type="GO" id="GO:0016208">
    <property type="term" value="F:AMP binding"/>
    <property type="evidence" value="ECO:0007669"/>
    <property type="project" value="TreeGrafter"/>
</dbReference>
<dbReference type="GO" id="GO:0005524">
    <property type="term" value="F:ATP binding"/>
    <property type="evidence" value="ECO:0007669"/>
    <property type="project" value="UniProtKB-UniRule"/>
</dbReference>
<dbReference type="GO" id="GO:0004721">
    <property type="term" value="F:phosphoprotein phosphatase activity"/>
    <property type="evidence" value="ECO:0007669"/>
    <property type="project" value="UniProtKB-KW"/>
</dbReference>
<dbReference type="GO" id="GO:0004674">
    <property type="term" value="F:protein serine/threonine kinase activity"/>
    <property type="evidence" value="ECO:0007669"/>
    <property type="project" value="UniProtKB-KW"/>
</dbReference>
<dbReference type="GO" id="GO:0006006">
    <property type="term" value="P:glucose metabolic process"/>
    <property type="evidence" value="ECO:0007669"/>
    <property type="project" value="InterPro"/>
</dbReference>
<dbReference type="GO" id="GO:0006097">
    <property type="term" value="P:glyoxylate cycle"/>
    <property type="evidence" value="ECO:0007669"/>
    <property type="project" value="UniProtKB-UniRule"/>
</dbReference>
<dbReference type="GO" id="GO:0006099">
    <property type="term" value="P:tricarboxylic acid cycle"/>
    <property type="evidence" value="ECO:0007669"/>
    <property type="project" value="UniProtKB-UniRule"/>
</dbReference>
<dbReference type="HAMAP" id="MF_00747">
    <property type="entry name" value="AceK"/>
    <property type="match status" value="1"/>
</dbReference>
<dbReference type="InterPro" id="IPR046855">
    <property type="entry name" value="AceK_kinase"/>
</dbReference>
<dbReference type="InterPro" id="IPR046854">
    <property type="entry name" value="AceK_regulatory"/>
</dbReference>
<dbReference type="InterPro" id="IPR010452">
    <property type="entry name" value="Isocitrate_DH_AceK"/>
</dbReference>
<dbReference type="NCBIfam" id="NF002804">
    <property type="entry name" value="PRK02946.1"/>
    <property type="match status" value="1"/>
</dbReference>
<dbReference type="PANTHER" id="PTHR39559">
    <property type="match status" value="1"/>
</dbReference>
<dbReference type="PANTHER" id="PTHR39559:SF1">
    <property type="entry name" value="ISOCITRATE DEHYDROGENASE KINASE_PHOSPHATASE"/>
    <property type="match status" value="1"/>
</dbReference>
<dbReference type="Pfam" id="PF06315">
    <property type="entry name" value="AceK_kinase"/>
    <property type="match status" value="1"/>
</dbReference>
<dbReference type="Pfam" id="PF20423">
    <property type="entry name" value="AceK_regulatory"/>
    <property type="match status" value="1"/>
</dbReference>
<dbReference type="PIRSF" id="PIRSF000719">
    <property type="entry name" value="AceK"/>
    <property type="match status" value="1"/>
</dbReference>
<organism>
    <name type="scientific">Burkholderia lata (strain ATCC 17760 / DSM 23089 / LMG 22485 / NCIMB 9086 / R18194 / 383)</name>
    <dbReference type="NCBI Taxonomy" id="482957"/>
    <lineage>
        <taxon>Bacteria</taxon>
        <taxon>Pseudomonadati</taxon>
        <taxon>Pseudomonadota</taxon>
        <taxon>Betaproteobacteria</taxon>
        <taxon>Burkholderiales</taxon>
        <taxon>Burkholderiaceae</taxon>
        <taxon>Burkholderia</taxon>
        <taxon>Burkholderia cepacia complex</taxon>
    </lineage>
</organism>
<feature type="chain" id="PRO_0000259147" description="Isocitrate dehydrogenase kinase/phosphatase">
    <location>
        <begin position="1"/>
        <end position="605"/>
    </location>
</feature>
<feature type="active site" evidence="1">
    <location>
        <position position="383"/>
    </location>
</feature>
<feature type="binding site" evidence="1">
    <location>
        <begin position="327"/>
        <end position="333"/>
    </location>
    <ligand>
        <name>ATP</name>
        <dbReference type="ChEBI" id="CHEBI:30616"/>
    </ligand>
</feature>
<feature type="binding site" evidence="1">
    <location>
        <position position="348"/>
    </location>
    <ligand>
        <name>ATP</name>
        <dbReference type="ChEBI" id="CHEBI:30616"/>
    </ligand>
</feature>
<protein>
    <recommendedName>
        <fullName evidence="1">Isocitrate dehydrogenase kinase/phosphatase</fullName>
        <shortName evidence="1">IDH kinase/phosphatase</shortName>
        <shortName evidence="1">IDHK/P</shortName>
        <ecNumber evidence="1">2.7.11.5</ecNumber>
        <ecNumber evidence="1">3.1.3.-</ecNumber>
    </recommendedName>
</protein>
<comment type="function">
    <text evidence="1">Bifunctional enzyme which can phosphorylate or dephosphorylate isocitrate dehydrogenase (IDH) on a specific serine residue. This is a regulatory mechanism which enables bacteria to bypass the Krebs cycle via the glyoxylate shunt in response to the source of carbon. When bacteria are grown on glucose, IDH is fully active and unphosphorylated, but when grown on acetate or ethanol, the activity of IDH declines drastically concomitant with its phosphorylation.</text>
</comment>
<comment type="catalytic activity">
    <reaction evidence="1">
        <text>L-seryl-[isocitrate dehydrogenase] + ATP = O-phospho-L-seryl-[isocitrate dehydrogenase] + ADP + H(+)</text>
        <dbReference type="Rhea" id="RHEA:43540"/>
        <dbReference type="Rhea" id="RHEA-COMP:10605"/>
        <dbReference type="Rhea" id="RHEA-COMP:10606"/>
        <dbReference type="ChEBI" id="CHEBI:15378"/>
        <dbReference type="ChEBI" id="CHEBI:29999"/>
        <dbReference type="ChEBI" id="CHEBI:30616"/>
        <dbReference type="ChEBI" id="CHEBI:83421"/>
        <dbReference type="ChEBI" id="CHEBI:456216"/>
        <dbReference type="EC" id="2.7.11.5"/>
    </reaction>
</comment>
<comment type="subcellular location">
    <subcellularLocation>
        <location evidence="1">Cytoplasm</location>
    </subcellularLocation>
</comment>
<comment type="similarity">
    <text evidence="1">Belongs to the AceK family.</text>
</comment>
<comment type="sequence caution" evidence="2">
    <conflict type="erroneous initiation">
        <sequence resource="EMBL-CDS" id="ABB09863"/>
    </conflict>
</comment>
<evidence type="ECO:0000255" key="1">
    <source>
        <dbReference type="HAMAP-Rule" id="MF_00747"/>
    </source>
</evidence>
<evidence type="ECO:0000305" key="2"/>
<gene>
    <name evidence="1" type="primary">aceK</name>
    <name type="ordered locus">Bcep18194_A6269</name>
</gene>
<accession>Q39CF3</accession>
<keyword id="KW-0067">ATP-binding</keyword>
<keyword id="KW-0963">Cytoplasm</keyword>
<keyword id="KW-0329">Glyoxylate bypass</keyword>
<keyword id="KW-0378">Hydrolase</keyword>
<keyword id="KW-0418">Kinase</keyword>
<keyword id="KW-0547">Nucleotide-binding</keyword>
<keyword id="KW-0904">Protein phosphatase</keyword>
<keyword id="KW-0723">Serine/threonine-protein kinase</keyword>
<keyword id="KW-0808">Transferase</keyword>
<keyword id="KW-0816">Tricarboxylic acid cycle</keyword>